<keyword id="KW-1185">Reference proteome</keyword>
<keyword id="KW-0687">Ribonucleoprotein</keyword>
<keyword id="KW-0689">Ribosomal protein</keyword>
<keyword id="KW-0694">RNA-binding</keyword>
<keyword id="KW-0699">rRNA-binding</keyword>
<dbReference type="EMBL" id="BX571874">
    <property type="protein sequence ID" value="CAE17096.1"/>
    <property type="molecule type" value="Genomic_DNA"/>
</dbReference>
<dbReference type="RefSeq" id="WP_011148793.1">
    <property type="nucleotide sequence ID" value="NC_005126.1"/>
</dbReference>
<dbReference type="SMR" id="Q7MYF3"/>
<dbReference type="STRING" id="243265.plu4724"/>
<dbReference type="GeneID" id="48850949"/>
<dbReference type="KEGG" id="plu:plu4724"/>
<dbReference type="eggNOG" id="COG0089">
    <property type="taxonomic scope" value="Bacteria"/>
</dbReference>
<dbReference type="HOGENOM" id="CLU_037562_3_1_6"/>
<dbReference type="OrthoDB" id="9793353at2"/>
<dbReference type="Proteomes" id="UP000002514">
    <property type="component" value="Chromosome"/>
</dbReference>
<dbReference type="GO" id="GO:1990904">
    <property type="term" value="C:ribonucleoprotein complex"/>
    <property type="evidence" value="ECO:0007669"/>
    <property type="project" value="UniProtKB-KW"/>
</dbReference>
<dbReference type="GO" id="GO:0005840">
    <property type="term" value="C:ribosome"/>
    <property type="evidence" value="ECO:0007669"/>
    <property type="project" value="UniProtKB-KW"/>
</dbReference>
<dbReference type="GO" id="GO:0019843">
    <property type="term" value="F:rRNA binding"/>
    <property type="evidence" value="ECO:0007669"/>
    <property type="project" value="UniProtKB-UniRule"/>
</dbReference>
<dbReference type="GO" id="GO:0003735">
    <property type="term" value="F:structural constituent of ribosome"/>
    <property type="evidence" value="ECO:0007669"/>
    <property type="project" value="InterPro"/>
</dbReference>
<dbReference type="GO" id="GO:0006412">
    <property type="term" value="P:translation"/>
    <property type="evidence" value="ECO:0007669"/>
    <property type="project" value="UniProtKB-UniRule"/>
</dbReference>
<dbReference type="FunFam" id="3.30.70.330:FF:000001">
    <property type="entry name" value="50S ribosomal protein L23"/>
    <property type="match status" value="1"/>
</dbReference>
<dbReference type="Gene3D" id="3.30.70.330">
    <property type="match status" value="1"/>
</dbReference>
<dbReference type="HAMAP" id="MF_01369_B">
    <property type="entry name" value="Ribosomal_uL23_B"/>
    <property type="match status" value="1"/>
</dbReference>
<dbReference type="InterPro" id="IPR012677">
    <property type="entry name" value="Nucleotide-bd_a/b_plait_sf"/>
</dbReference>
<dbReference type="InterPro" id="IPR013025">
    <property type="entry name" value="Ribosomal_uL23-like"/>
</dbReference>
<dbReference type="InterPro" id="IPR012678">
    <property type="entry name" value="Ribosomal_uL23/eL15/eS24_sf"/>
</dbReference>
<dbReference type="InterPro" id="IPR001014">
    <property type="entry name" value="Ribosomal_uL23_CS"/>
</dbReference>
<dbReference type="NCBIfam" id="NF004358">
    <property type="entry name" value="PRK05738.1-1"/>
    <property type="match status" value="1"/>
</dbReference>
<dbReference type="NCBIfam" id="NF004359">
    <property type="entry name" value="PRK05738.1-3"/>
    <property type="match status" value="1"/>
</dbReference>
<dbReference type="NCBIfam" id="NF004363">
    <property type="entry name" value="PRK05738.2-4"/>
    <property type="match status" value="1"/>
</dbReference>
<dbReference type="NCBIfam" id="NF004366">
    <property type="entry name" value="PRK05738.3-2"/>
    <property type="match status" value="1"/>
</dbReference>
<dbReference type="PANTHER" id="PTHR11620">
    <property type="entry name" value="60S RIBOSOMAL PROTEIN L23A"/>
    <property type="match status" value="1"/>
</dbReference>
<dbReference type="Pfam" id="PF00276">
    <property type="entry name" value="Ribosomal_L23"/>
    <property type="match status" value="1"/>
</dbReference>
<dbReference type="SUPFAM" id="SSF54189">
    <property type="entry name" value="Ribosomal proteins S24e, L23 and L15e"/>
    <property type="match status" value="1"/>
</dbReference>
<dbReference type="PROSITE" id="PS00050">
    <property type="entry name" value="RIBOSOMAL_L23"/>
    <property type="match status" value="1"/>
</dbReference>
<reference key="1">
    <citation type="journal article" date="2003" name="Nat. Biotechnol.">
        <title>The genome sequence of the entomopathogenic bacterium Photorhabdus luminescens.</title>
        <authorList>
            <person name="Duchaud E."/>
            <person name="Rusniok C."/>
            <person name="Frangeul L."/>
            <person name="Buchrieser C."/>
            <person name="Givaudan A."/>
            <person name="Taourit S."/>
            <person name="Bocs S."/>
            <person name="Boursaux-Eude C."/>
            <person name="Chandler M."/>
            <person name="Charles J.-F."/>
            <person name="Dassa E."/>
            <person name="Derose R."/>
            <person name="Derzelle S."/>
            <person name="Freyssinet G."/>
            <person name="Gaudriault S."/>
            <person name="Medigue C."/>
            <person name="Lanois A."/>
            <person name="Powell K."/>
            <person name="Siguier P."/>
            <person name="Vincent R."/>
            <person name="Wingate V."/>
            <person name="Zouine M."/>
            <person name="Glaser P."/>
            <person name="Boemare N."/>
            <person name="Danchin A."/>
            <person name="Kunst F."/>
        </authorList>
    </citation>
    <scope>NUCLEOTIDE SEQUENCE [LARGE SCALE GENOMIC DNA]</scope>
    <source>
        <strain>DSM 15139 / CIP 105565 / TT01</strain>
    </source>
</reference>
<feature type="chain" id="PRO_0000272794" description="Large ribosomal subunit protein uL23">
    <location>
        <begin position="1"/>
        <end position="100"/>
    </location>
</feature>
<comment type="function">
    <text evidence="1">One of the early assembly proteins it binds 23S rRNA. One of the proteins that surrounds the polypeptide exit tunnel on the outside of the ribosome. Forms the main docking site for trigger factor binding to the ribosome.</text>
</comment>
<comment type="subunit">
    <text evidence="1">Part of the 50S ribosomal subunit. Contacts protein L29, and trigger factor when it is bound to the ribosome.</text>
</comment>
<comment type="similarity">
    <text evidence="1">Belongs to the universal ribosomal protein uL23 family.</text>
</comment>
<protein>
    <recommendedName>
        <fullName evidence="1">Large ribosomal subunit protein uL23</fullName>
    </recommendedName>
    <alternativeName>
        <fullName evidence="2">50S ribosomal protein L23</fullName>
    </alternativeName>
</protein>
<name>RL23_PHOLL</name>
<accession>Q7MYF3</accession>
<gene>
    <name evidence="1" type="primary">rplW</name>
    <name type="ordered locus">plu4724</name>
</gene>
<organism>
    <name type="scientific">Photorhabdus laumondii subsp. laumondii (strain DSM 15139 / CIP 105565 / TT01)</name>
    <name type="common">Photorhabdus luminescens subsp. laumondii</name>
    <dbReference type="NCBI Taxonomy" id="243265"/>
    <lineage>
        <taxon>Bacteria</taxon>
        <taxon>Pseudomonadati</taxon>
        <taxon>Pseudomonadota</taxon>
        <taxon>Gammaproteobacteria</taxon>
        <taxon>Enterobacterales</taxon>
        <taxon>Morganellaceae</taxon>
        <taxon>Photorhabdus</taxon>
    </lineage>
</organism>
<evidence type="ECO:0000255" key="1">
    <source>
        <dbReference type="HAMAP-Rule" id="MF_01369"/>
    </source>
</evidence>
<evidence type="ECO:0000305" key="2"/>
<sequence length="100" mass="11175">MIREERLLKVLRAPHVSEKASTAMEKSNAIVLKVAKDATKAEIKAAVQKLFEVEVEGVNTLLVKGKTKRHGQRIGRRSDWKKAYVTLKEGQNMDFIGGAE</sequence>
<proteinExistence type="inferred from homology"/>